<protein>
    <recommendedName>
        <fullName evidence="1">Envelope glycoprotein M</fullName>
        <shortName evidence="1">gM</shortName>
    </recommendedName>
</protein>
<keyword id="KW-1015">Disulfide bond</keyword>
<keyword id="KW-0325">Glycoprotein</keyword>
<keyword id="KW-1039">Host endosome</keyword>
<keyword id="KW-1040">Host Golgi apparatus</keyword>
<keyword id="KW-1043">Host membrane</keyword>
<keyword id="KW-1048">Host nucleus</keyword>
<keyword id="KW-0472">Membrane</keyword>
<keyword id="KW-1185">Reference proteome</keyword>
<keyword id="KW-0812">Transmembrane</keyword>
<keyword id="KW-1133">Transmembrane helix</keyword>
<keyword id="KW-0261">Viral envelope protein</keyword>
<keyword id="KW-0946">Virion</keyword>
<gene>
    <name evidence="1" type="primary">gM</name>
    <name type="ORF">UL10</name>
</gene>
<dbReference type="EMBL" id="X97257">
    <property type="protein sequence ID" value="CAA65904.1"/>
    <property type="molecule type" value="Genomic_DNA"/>
</dbReference>
<dbReference type="EMBL" id="X97257">
    <property type="protein sequence ID" value="CAA65905.1"/>
    <property type="status" value="ALT_INIT"/>
    <property type="molecule type" value="Genomic_DNA"/>
</dbReference>
<dbReference type="EMBL" id="BK001744">
    <property type="protein sequence ID" value="DAA02185.1"/>
    <property type="molecule type" value="Genomic_DNA"/>
</dbReference>
<dbReference type="RefSeq" id="YP_068365.1">
    <property type="nucleotide sequence ID" value="NC_006151.1"/>
</dbReference>
<dbReference type="IntAct" id="Q85041">
    <property type="interactions" value="2"/>
</dbReference>
<dbReference type="GeneID" id="2952500"/>
<dbReference type="KEGG" id="vg:2952500"/>
<dbReference type="Proteomes" id="UP000165522">
    <property type="component" value="Genome"/>
</dbReference>
<dbReference type="GO" id="GO:0044175">
    <property type="term" value="C:host cell endosome membrane"/>
    <property type="evidence" value="ECO:0007669"/>
    <property type="project" value="UniProtKB-SubCell"/>
</dbReference>
<dbReference type="GO" id="GO:0044177">
    <property type="term" value="C:host cell Golgi apparatus"/>
    <property type="evidence" value="ECO:0007669"/>
    <property type="project" value="UniProtKB-SubCell"/>
</dbReference>
<dbReference type="GO" id="GO:0044201">
    <property type="term" value="C:host cell nuclear inner membrane"/>
    <property type="evidence" value="ECO:0007669"/>
    <property type="project" value="UniProtKB-SubCell"/>
</dbReference>
<dbReference type="GO" id="GO:0016020">
    <property type="term" value="C:membrane"/>
    <property type="evidence" value="ECO:0007669"/>
    <property type="project" value="UniProtKB-KW"/>
</dbReference>
<dbReference type="GO" id="GO:0019031">
    <property type="term" value="C:viral envelope"/>
    <property type="evidence" value="ECO:0007669"/>
    <property type="project" value="UniProtKB-KW"/>
</dbReference>
<dbReference type="GO" id="GO:0055036">
    <property type="term" value="C:virion membrane"/>
    <property type="evidence" value="ECO:0007669"/>
    <property type="project" value="UniProtKB-SubCell"/>
</dbReference>
<dbReference type="GO" id="GO:0019068">
    <property type="term" value="P:virion assembly"/>
    <property type="evidence" value="ECO:0000315"/>
    <property type="project" value="AgBase"/>
</dbReference>
<dbReference type="HAMAP" id="MF_04035">
    <property type="entry name" value="HSV_GM"/>
    <property type="match status" value="1"/>
</dbReference>
<dbReference type="InterPro" id="IPR000785">
    <property type="entry name" value="Herpes_glycop_M"/>
</dbReference>
<dbReference type="Pfam" id="PF01528">
    <property type="entry name" value="Herpes_glycop"/>
    <property type="match status" value="1"/>
</dbReference>
<dbReference type="PRINTS" id="PR00333">
    <property type="entry name" value="HSVINTEGRLMP"/>
</dbReference>
<comment type="function">
    <text evidence="1">Envelope glycoprotein important for virion assembly and egress. Plays a role in the correct incorporation of gH-gL into virion membrane. Directs the glycoprotein N (gN) to the host trans-Golgi network.</text>
</comment>
<comment type="subunit">
    <text evidence="1 2">Interacts (via N-terminus) with gN (via N-terminus). The gM-gN heterodimer forms the gCII complex.</text>
</comment>
<comment type="subcellular location">
    <subcellularLocation>
        <location evidence="1">Virion membrane</location>
        <topology evidence="1">Multi-pass membrane protein</topology>
    </subcellularLocation>
    <subcellularLocation>
        <location evidence="1">Host Golgi apparatus</location>
        <location evidence="1">Host trans-Golgi network</location>
    </subcellularLocation>
    <subcellularLocation>
        <location evidence="1">Host endosome membrane</location>
        <topology evidence="1">Multi-pass membrane protein</topology>
    </subcellularLocation>
    <subcellularLocation>
        <location evidence="1">Host nucleus inner membrane</location>
        <topology evidence="1">Multi-pass membrane protein</topology>
    </subcellularLocation>
    <text evidence="1">During virion morphogenesis, this protein accumulates in the trans-Golgi network where secondary envelopment occurs.</text>
</comment>
<comment type="similarity">
    <text evidence="1">Belongs to the herpesviridae glycoprotein M family.</text>
</comment>
<comment type="sequence caution" evidence="3">
    <conflict type="erroneous initiation">
        <sequence resource="EMBL-CDS" id="CAA65905"/>
    </conflict>
    <text>Extended N-terminus.</text>
</comment>
<proteinExistence type="evidence at protein level"/>
<sequence>MCGPRNAEAVSWRSWLIEVCGFALAALTLVLTLIFASLPEMGFPCFYATVADYDTLNDTSGGVWTRQPLVAPALFLETPTVTSFFGFTATVLLAHALYAVAGAVVLRREAGRLAFQPSVVLYAASTVAAPGTLMLGALCAWTLQAVVLLMAHKQAGLAAAAYITHFVFLALFGACHACKGTGDVRAALAASPPLRRVAVHARAVVTNVVLGAVGLGAAVVGLMLGVLLANSFHISLWKTAEAALAVFTLLALALMVFVEVVVSGYVQVLPTPAFCVLVASAAFGVSAHRYFAKFSEALGETHGVVIGTRAVLAVLSLIALAMIVVRLVRACIAHRARGSRFYANVDKARTTARRYLQKRLHGRGNDEYLLAPGSGDDEFDDGDEVVYENLGFE</sequence>
<feature type="chain" id="PRO_5000095951" description="Envelope glycoprotein M">
    <location>
        <begin position="1"/>
        <end position="393"/>
    </location>
</feature>
<feature type="topological domain" description="Intravirion" evidence="1">
    <location>
        <begin position="1"/>
        <end position="14"/>
    </location>
</feature>
<feature type="transmembrane region" description="Helical" evidence="1">
    <location>
        <begin position="15"/>
        <end position="35"/>
    </location>
</feature>
<feature type="topological domain" description="Virion surface" evidence="1">
    <location>
        <begin position="36"/>
        <end position="83"/>
    </location>
</feature>
<feature type="transmembrane region" description="Helical" evidence="1">
    <location>
        <begin position="84"/>
        <end position="104"/>
    </location>
</feature>
<feature type="topological domain" description="Intravirion" evidence="1">
    <location>
        <begin position="105"/>
        <end position="130"/>
    </location>
</feature>
<feature type="transmembrane region" description="Helical" evidence="1">
    <location>
        <begin position="131"/>
        <end position="151"/>
    </location>
</feature>
<feature type="topological domain" description="Virion surface" evidence="1">
    <location>
        <begin position="152"/>
        <end position="154"/>
    </location>
</feature>
<feature type="transmembrane region" description="Helical" evidence="1">
    <location>
        <begin position="155"/>
        <end position="175"/>
    </location>
</feature>
<feature type="topological domain" description="Intravirion" evidence="1">
    <location>
        <begin position="176"/>
        <end position="207"/>
    </location>
</feature>
<feature type="transmembrane region" description="Helical" evidence="1">
    <location>
        <begin position="208"/>
        <end position="228"/>
    </location>
</feature>
<feature type="topological domain" description="Virion surface" evidence="1">
    <location>
        <begin position="229"/>
        <end position="241"/>
    </location>
</feature>
<feature type="transmembrane region" description="Helical" evidence="1">
    <location>
        <begin position="242"/>
        <end position="262"/>
    </location>
</feature>
<feature type="topological domain" description="Intravirion" evidence="1">
    <location>
        <begin position="263"/>
        <end position="264"/>
    </location>
</feature>
<feature type="transmembrane region" description="Helical" evidence="1">
    <location>
        <begin position="265"/>
        <end position="285"/>
    </location>
</feature>
<feature type="topological domain" description="Virion surface" evidence="1">
    <location>
        <begin position="286"/>
        <end position="303"/>
    </location>
</feature>
<feature type="transmembrane region" description="Helical" evidence="1">
    <location>
        <begin position="304"/>
        <end position="324"/>
    </location>
</feature>
<feature type="topological domain" description="Intravirion" evidence="1">
    <location>
        <begin position="325"/>
        <end position="393"/>
    </location>
</feature>
<feature type="disulfide bond" description="Interchain (with gN)" evidence="1">
    <location>
        <position position="45"/>
    </location>
</feature>
<reference key="1">
    <citation type="journal article" date="1996" name="J. Virol.">
        <title>Identification and characterization of pseudorabies virus glycoprotein gM as a nonessential virion component.</title>
        <authorList>
            <person name="Dijkstra J.M."/>
            <person name="Visser N."/>
            <person name="Mettenleiter T.C."/>
            <person name="Klupp B.G."/>
        </authorList>
    </citation>
    <scope>NUCLEOTIDE SEQUENCE [GENOMIC DNA]</scope>
    <source>
        <strain>Kaplan</strain>
    </source>
</reference>
<reference key="2">
    <citation type="journal article" date="2004" name="J. Virol.">
        <title>Complete, annotated sequence of the pseudorabies virus genome.</title>
        <authorList>
            <person name="Klupp B.G."/>
            <person name="Hengartner C.J."/>
            <person name="Mettenleiter T.C."/>
            <person name="Enquist L.W."/>
        </authorList>
    </citation>
    <scope>NUCLEOTIDE SEQUENCE [LARGE SCALE GENOMIC DNA]</scope>
</reference>
<reference key="3">
    <citation type="journal article" date="1998" name="J. Virol.">
        <title>Glycoproteins M and N of pseudorabies virus form a disulfide-linked complex.</title>
        <authorList>
            <person name="Joens A."/>
            <person name="Dijkstra J.M."/>
            <person name="Mettenleiter T.C."/>
        </authorList>
    </citation>
    <scope>SUBUNIT</scope>
    <scope>DISULFIDE BOND</scope>
</reference>
<organism>
    <name type="scientific">Suid herpesvirus 1</name>
    <name type="common">SuHV-1</name>
    <name type="synonym">Pseudorabies virus</name>
    <dbReference type="NCBI Taxonomy" id="10345"/>
    <lineage>
        <taxon>Viruses</taxon>
        <taxon>Duplodnaviria</taxon>
        <taxon>Heunggongvirae</taxon>
        <taxon>Peploviricota</taxon>
        <taxon>Herviviricetes</taxon>
        <taxon>Herpesvirales</taxon>
        <taxon>Orthoherpesviridae</taxon>
        <taxon>Alphaherpesvirinae</taxon>
        <taxon>Varicellovirus</taxon>
        <taxon>Varicellovirus suidalpha1</taxon>
    </lineage>
</organism>
<evidence type="ECO:0000255" key="1">
    <source>
        <dbReference type="HAMAP-Rule" id="MF_04035"/>
    </source>
</evidence>
<evidence type="ECO:0000269" key="2">
    <source>
    </source>
</evidence>
<evidence type="ECO:0000305" key="3"/>
<accession>Q85041</accession>
<accession>Q5PP86</accession>
<accession>Q85042</accession>
<name>GM_SUHV</name>